<feature type="chain" id="PRO_0000126641" description="Cadherin-2">
    <location>
        <begin position="1" status="less than"/>
        <end position="238" status="greater than"/>
    </location>
</feature>
<feature type="topological domain" description="Extracellular" evidence="6">
    <location>
        <begin position="1" status="less than"/>
        <end position="238" status="greater than"/>
    </location>
</feature>
<feature type="domain" description="Cadherin 1" evidence="7">
    <location>
        <begin position="1" status="less than"/>
        <end position="46"/>
    </location>
</feature>
<feature type="domain" description="Cadherin 2" evidence="7">
    <location>
        <begin position="47"/>
        <end position="161"/>
    </location>
</feature>
<feature type="domain" description="Cadherin 3" evidence="7">
    <location>
        <begin position="162"/>
        <end position="238" status="greater than"/>
    </location>
</feature>
<feature type="binding site" evidence="3">
    <location>
        <position position="5"/>
    </location>
    <ligand>
        <name>Ca(2+)</name>
        <dbReference type="ChEBI" id="CHEBI:29108"/>
        <label>1</label>
    </ligand>
</feature>
<feature type="binding site" evidence="3">
    <location>
        <position position="7"/>
    </location>
    <ligand>
        <name>Ca(2+)</name>
        <dbReference type="ChEBI" id="CHEBI:29108"/>
        <label>1</label>
    </ligand>
</feature>
<feature type="binding site" evidence="3">
    <location>
        <position position="7"/>
    </location>
    <ligand>
        <name>Ca(2+)</name>
        <dbReference type="ChEBI" id="CHEBI:29108"/>
        <label>2</label>
    </ligand>
</feature>
<feature type="binding site" evidence="3">
    <location>
        <position position="38"/>
    </location>
    <ligand>
        <name>Ca(2+)</name>
        <dbReference type="ChEBI" id="CHEBI:29108"/>
        <label>2</label>
    </ligand>
</feature>
<feature type="binding site" evidence="3">
    <location>
        <position position="39"/>
    </location>
    <ligand>
        <name>Ca(2+)</name>
        <dbReference type="ChEBI" id="CHEBI:29108"/>
        <label>2</label>
    </ligand>
</feature>
<feature type="binding site" evidence="3">
    <location>
        <position position="40"/>
    </location>
    <ligand>
        <name>Ca(2+)</name>
        <dbReference type="ChEBI" id="CHEBI:29108"/>
        <label>3</label>
    </ligand>
</feature>
<feature type="binding site" evidence="3">
    <location>
        <position position="41"/>
    </location>
    <ligand>
        <name>Ca(2+)</name>
        <dbReference type="ChEBI" id="CHEBI:29108"/>
        <label>1</label>
    </ligand>
</feature>
<feature type="binding site" evidence="3">
    <location>
        <position position="41"/>
    </location>
    <ligand>
        <name>Ca(2+)</name>
        <dbReference type="ChEBI" id="CHEBI:29108"/>
        <label>2</label>
    </ligand>
</feature>
<feature type="binding site" evidence="3">
    <location>
        <position position="42"/>
    </location>
    <ligand>
        <name>Ca(2+)</name>
        <dbReference type="ChEBI" id="CHEBI:29108"/>
        <label>3</label>
    </ligand>
</feature>
<feature type="binding site" evidence="3">
    <location>
        <position position="72"/>
    </location>
    <ligand>
        <name>Ca(2+)</name>
        <dbReference type="ChEBI" id="CHEBI:29108"/>
        <label>3</label>
    </ligand>
</feature>
<feature type="binding site" evidence="3">
    <location>
        <position position="74"/>
    </location>
    <ligand>
        <name>Ca(2+)</name>
        <dbReference type="ChEBI" id="CHEBI:29108"/>
        <label>2</label>
    </ligand>
</feature>
<feature type="binding site" evidence="3">
    <location>
        <position position="80"/>
    </location>
    <ligand>
        <name>Ca(2+)</name>
        <dbReference type="ChEBI" id="CHEBI:29108"/>
        <label>3</label>
    </ligand>
</feature>
<feature type="binding site" evidence="3">
    <location>
        <position position="132"/>
    </location>
    <ligand>
        <name>Ca(2+)</name>
        <dbReference type="ChEBI" id="CHEBI:29108"/>
        <label>3</label>
    </ligand>
</feature>
<feature type="glycosylation site" description="N-linked (GlcNAc...) asparagine" evidence="6">
    <location>
        <position position="52"/>
    </location>
</feature>
<feature type="glycosylation site" description="N-linked (GlcNAc...) asparagine" evidence="6">
    <location>
        <position position="104"/>
    </location>
</feature>
<feature type="glycosylation site" description="N-linked (GlcNAc...) asparagine" evidence="6">
    <location>
        <position position="181"/>
    </location>
</feature>
<feature type="non-terminal residue">
    <location>
        <position position="1"/>
    </location>
</feature>
<feature type="non-terminal residue">
    <location>
        <position position="238"/>
    </location>
</feature>
<dbReference type="EMBL" id="AJ003143">
    <property type="protein sequence ID" value="CAA05899.1"/>
    <property type="molecule type" value="mRNA"/>
</dbReference>
<dbReference type="SMR" id="O55075"/>
<dbReference type="GlyCosmos" id="O55075">
    <property type="glycosylation" value="3 sites, No reported glycans"/>
</dbReference>
<dbReference type="PaxDb" id="10029-XP_007637632.1"/>
<dbReference type="eggNOG" id="KOG3594">
    <property type="taxonomic scope" value="Eukaryota"/>
</dbReference>
<dbReference type="Proteomes" id="UP000694386">
    <property type="component" value="Unplaced"/>
</dbReference>
<dbReference type="Proteomes" id="UP001108280">
    <property type="component" value="Unplaced"/>
</dbReference>
<dbReference type="GO" id="GO:0005912">
    <property type="term" value="C:adherens junction"/>
    <property type="evidence" value="ECO:0000250"/>
    <property type="project" value="UniProtKB"/>
</dbReference>
<dbReference type="GO" id="GO:0045177">
    <property type="term" value="C:apical part of cell"/>
    <property type="evidence" value="ECO:0007669"/>
    <property type="project" value="TreeGrafter"/>
</dbReference>
<dbReference type="GO" id="GO:0016342">
    <property type="term" value="C:catenin complex"/>
    <property type="evidence" value="ECO:0007669"/>
    <property type="project" value="TreeGrafter"/>
</dbReference>
<dbReference type="GO" id="GO:0030054">
    <property type="term" value="C:cell junction"/>
    <property type="evidence" value="ECO:0000250"/>
    <property type="project" value="UniProtKB"/>
</dbReference>
<dbReference type="GO" id="GO:0009986">
    <property type="term" value="C:cell surface"/>
    <property type="evidence" value="ECO:0000250"/>
    <property type="project" value="UniProtKB"/>
</dbReference>
<dbReference type="GO" id="GO:0005737">
    <property type="term" value="C:cytoplasm"/>
    <property type="evidence" value="ECO:0007669"/>
    <property type="project" value="TreeGrafter"/>
</dbReference>
<dbReference type="GO" id="GO:0030057">
    <property type="term" value="C:desmosome"/>
    <property type="evidence" value="ECO:0000250"/>
    <property type="project" value="UniProtKB"/>
</dbReference>
<dbReference type="GO" id="GO:0014704">
    <property type="term" value="C:intercalated disc"/>
    <property type="evidence" value="ECO:0000250"/>
    <property type="project" value="UniProtKB"/>
</dbReference>
<dbReference type="GO" id="GO:0030027">
    <property type="term" value="C:lamellipodium"/>
    <property type="evidence" value="ECO:0007669"/>
    <property type="project" value="TreeGrafter"/>
</dbReference>
<dbReference type="GO" id="GO:0043005">
    <property type="term" value="C:neuron projection"/>
    <property type="evidence" value="ECO:0007669"/>
    <property type="project" value="TreeGrafter"/>
</dbReference>
<dbReference type="GO" id="GO:0005886">
    <property type="term" value="C:plasma membrane"/>
    <property type="evidence" value="ECO:0000250"/>
    <property type="project" value="UniProtKB"/>
</dbReference>
<dbReference type="GO" id="GO:0014069">
    <property type="term" value="C:postsynaptic density"/>
    <property type="evidence" value="ECO:0007669"/>
    <property type="project" value="TreeGrafter"/>
</dbReference>
<dbReference type="GO" id="GO:0099634">
    <property type="term" value="C:postsynaptic specialization membrane"/>
    <property type="evidence" value="ECO:0007669"/>
    <property type="project" value="TreeGrafter"/>
</dbReference>
<dbReference type="GO" id="GO:0048787">
    <property type="term" value="C:presynaptic active zone membrane"/>
    <property type="evidence" value="ECO:0007669"/>
    <property type="project" value="TreeGrafter"/>
</dbReference>
<dbReference type="GO" id="GO:0042383">
    <property type="term" value="C:sarcolemma"/>
    <property type="evidence" value="ECO:0007669"/>
    <property type="project" value="UniProtKB-SubCell"/>
</dbReference>
<dbReference type="GO" id="GO:0008013">
    <property type="term" value="F:beta-catenin binding"/>
    <property type="evidence" value="ECO:0007669"/>
    <property type="project" value="TreeGrafter"/>
</dbReference>
<dbReference type="GO" id="GO:0045296">
    <property type="term" value="F:cadherin binding"/>
    <property type="evidence" value="ECO:0007669"/>
    <property type="project" value="TreeGrafter"/>
</dbReference>
<dbReference type="GO" id="GO:0005509">
    <property type="term" value="F:calcium ion binding"/>
    <property type="evidence" value="ECO:0000250"/>
    <property type="project" value="UniProtKB"/>
</dbReference>
<dbReference type="GO" id="GO:0034332">
    <property type="term" value="P:adherens junction organization"/>
    <property type="evidence" value="ECO:0007669"/>
    <property type="project" value="TreeGrafter"/>
</dbReference>
<dbReference type="GO" id="GO:0016339">
    <property type="term" value="P:calcium-dependent cell-cell adhesion via plasma membrane cell adhesion molecules"/>
    <property type="evidence" value="ECO:0007669"/>
    <property type="project" value="TreeGrafter"/>
</dbReference>
<dbReference type="GO" id="GO:0016477">
    <property type="term" value="P:cell migration"/>
    <property type="evidence" value="ECO:0007669"/>
    <property type="project" value="TreeGrafter"/>
</dbReference>
<dbReference type="GO" id="GO:0000902">
    <property type="term" value="P:cell morphogenesis"/>
    <property type="evidence" value="ECO:0007669"/>
    <property type="project" value="TreeGrafter"/>
</dbReference>
<dbReference type="GO" id="GO:0098609">
    <property type="term" value="P:cell-cell adhesion"/>
    <property type="evidence" value="ECO:0000250"/>
    <property type="project" value="UniProtKB"/>
</dbReference>
<dbReference type="GO" id="GO:0044331">
    <property type="term" value="P:cell-cell adhesion mediated by cadherin"/>
    <property type="evidence" value="ECO:0000250"/>
    <property type="project" value="UniProtKB"/>
</dbReference>
<dbReference type="GO" id="GO:0007043">
    <property type="term" value="P:cell-cell junction assembly"/>
    <property type="evidence" value="ECO:0007669"/>
    <property type="project" value="TreeGrafter"/>
</dbReference>
<dbReference type="GO" id="GO:0010001">
    <property type="term" value="P:glial cell differentiation"/>
    <property type="evidence" value="ECO:0000250"/>
    <property type="project" value="UniProtKB"/>
</dbReference>
<dbReference type="GO" id="GO:0007156">
    <property type="term" value="P:homophilic cell adhesion via plasma membrane adhesion molecules"/>
    <property type="evidence" value="ECO:0007669"/>
    <property type="project" value="InterPro"/>
</dbReference>
<dbReference type="GO" id="GO:0097150">
    <property type="term" value="P:neuronal stem cell population maintenance"/>
    <property type="evidence" value="ECO:0000250"/>
    <property type="project" value="UniProtKB"/>
</dbReference>
<dbReference type="GO" id="GO:0007416">
    <property type="term" value="P:synapse assembly"/>
    <property type="evidence" value="ECO:0007669"/>
    <property type="project" value="TreeGrafter"/>
</dbReference>
<dbReference type="CDD" id="cd11304">
    <property type="entry name" value="Cadherin_repeat"/>
    <property type="match status" value="2"/>
</dbReference>
<dbReference type="FunFam" id="2.60.40.60:FF:000019">
    <property type="entry name" value="Cadherin 2"/>
    <property type="match status" value="1"/>
</dbReference>
<dbReference type="FunFam" id="2.60.40.60:FF:000022">
    <property type="entry name" value="Cadherin 2"/>
    <property type="match status" value="1"/>
</dbReference>
<dbReference type="Gene3D" id="2.60.40.60">
    <property type="entry name" value="Cadherins"/>
    <property type="match status" value="3"/>
</dbReference>
<dbReference type="InterPro" id="IPR039808">
    <property type="entry name" value="Cadherin"/>
</dbReference>
<dbReference type="InterPro" id="IPR002126">
    <property type="entry name" value="Cadherin-like_dom"/>
</dbReference>
<dbReference type="InterPro" id="IPR015919">
    <property type="entry name" value="Cadherin-like_sf"/>
</dbReference>
<dbReference type="InterPro" id="IPR020894">
    <property type="entry name" value="Cadherin_CS"/>
</dbReference>
<dbReference type="PANTHER" id="PTHR24027:SF79">
    <property type="entry name" value="CADHERIN-2"/>
    <property type="match status" value="1"/>
</dbReference>
<dbReference type="PANTHER" id="PTHR24027">
    <property type="entry name" value="CADHERIN-23"/>
    <property type="match status" value="1"/>
</dbReference>
<dbReference type="Pfam" id="PF00028">
    <property type="entry name" value="Cadherin"/>
    <property type="match status" value="2"/>
</dbReference>
<dbReference type="PRINTS" id="PR00205">
    <property type="entry name" value="CADHERIN"/>
</dbReference>
<dbReference type="SMART" id="SM00112">
    <property type="entry name" value="CA"/>
    <property type="match status" value="1"/>
</dbReference>
<dbReference type="SUPFAM" id="SSF49313">
    <property type="entry name" value="Cadherin-like"/>
    <property type="match status" value="3"/>
</dbReference>
<dbReference type="PROSITE" id="PS00232">
    <property type="entry name" value="CADHERIN_1"/>
    <property type="match status" value="2"/>
</dbReference>
<dbReference type="PROSITE" id="PS50268">
    <property type="entry name" value="CADHERIN_2"/>
    <property type="match status" value="3"/>
</dbReference>
<reference key="1">
    <citation type="submission" date="1997-12" db="EMBL/GenBank/DDBJ databases">
        <authorList>
            <person name="Levenberg S."/>
            <person name="Sadot E."/>
            <person name="Goichberg P."/>
            <person name="Geiger B."/>
        </authorList>
    </citation>
    <scope>NUCLEOTIDE SEQUENCE [MRNA]</scope>
    <source>
        <tissue>Ovary</tissue>
    </source>
</reference>
<protein>
    <recommendedName>
        <fullName>Cadherin-2</fullName>
    </recommendedName>
    <alternativeName>
        <fullName>Neural cadherin</fullName>
        <shortName>N-cadherin</shortName>
    </alternativeName>
    <cdAntigenName>CD325</cdAntigenName>
</protein>
<sequence>TKPLDRELIARFHLRAHAVDINGNRVENPIDIVINVIDMNDNRPEFLHQVWNGSVPEGSKPGTYVMTVTAIDADDPNALNGMLRYRILSQAPSTPSPNMFTINNETGDIITVAAGLDREKVQQYTLIIQATDMEGNPTYGLSNTATAVITVTDVNDNPPEFTAMTFYGEVPENRVEVIVANLTVTDKDQPHTPAWNAVYRISGGDPTGRFAIHTDPNSNDGLVTVVKPIDFETNRMFV</sequence>
<keyword id="KW-0106">Calcium</keyword>
<keyword id="KW-0130">Cell adhesion</keyword>
<keyword id="KW-0965">Cell junction</keyword>
<keyword id="KW-1003">Cell membrane</keyword>
<keyword id="KW-0325">Glycoprotein</keyword>
<keyword id="KW-0472">Membrane</keyword>
<keyword id="KW-0479">Metal-binding</keyword>
<keyword id="KW-0597">Phosphoprotein</keyword>
<keyword id="KW-0677">Repeat</keyword>
<keyword id="KW-0812">Transmembrane</keyword>
<proteinExistence type="evidence at transcript level"/>
<comment type="function">
    <text evidence="2 3">Calcium-dependent cell adhesion protein; preferentially mediates homotypic cell-cell adhesion by dimerization with a CDH2 chain from another cell. Cadherins may thus contribute to the sorting of heterogeneous cell types. Acts as a regulator of neural stem cells quiescence by mediating anchorage of neural stem cells to ependymocytes in the adult subependymal zone: upon cleavage by MMP24, CDH2-mediated anchorage is affected, leading to modulate neural stem cell quiescence. Plays a role in cell-to-cell junction formation between pancreatic beta cells and neural crest stem (NCS) cells, promoting the formation of processes by NCS cells (By similarity). Required for proper neurite branching. Required for pre- and postsynaptic organization (By similarity). CDH2 may be involved in neuronal recognition mechanism. In hippocampal neurons, may regulate dendritic spine density.</text>
</comment>
<comment type="subunit">
    <text evidence="3 4 5">Homodimer (via extracellular region). Can also form heterodimers with other cadherins (via extracellular region). Dimerization occurs in trans, i.e. with a cadherin chain from another cell (By similarity). Interacts with CDCP1 (By similarity). Interacts with PCDH8; this complex may also include TAOK2 (By similarity). The interaction with PCDH8 may lead to internalization through TAOK2/p38 MAPK pathway (By similarity). Identified in a complex containing FGFR4, NCAM1, CDH2, PLCG1, FRS2, SRC, SHC1, GAP43 and CTTN. May interact with OBSCN (via protein kinase domain 2) (By similarity).</text>
</comment>
<comment type="subcellular location">
    <subcellularLocation>
        <location evidence="3">Cell membrane</location>
        <topology evidence="6">Single-pass type I membrane protein</topology>
    </subcellularLocation>
    <subcellularLocation>
        <location evidence="3">Cell membrane</location>
        <location evidence="3">Sarcolemma</location>
    </subcellularLocation>
    <subcellularLocation>
        <location evidence="4">Cell junction</location>
    </subcellularLocation>
    <subcellularLocation>
        <location evidence="3">Cell surface</location>
    </subcellularLocation>
    <subcellularLocation>
        <location evidence="3">Cell junction</location>
        <location evidence="3">Desmosome</location>
    </subcellularLocation>
    <subcellularLocation>
        <location evidence="3">Cell junction</location>
        <location evidence="3">Adherens junction</location>
    </subcellularLocation>
    <text evidence="3">Colocalizes with TMEM65 at the intercalated disk in cardiomyocytes. Colocalizes with OBSCN at the intercalated disk and sarcolemma in cardiomyocytes.</text>
</comment>
<comment type="domain">
    <text evidence="3">Three calcium ions are usually bound at the interface of each cadherin domain and rigidify the connections, imparting a strong curvature to the full-length ectodomain. Calcium-binding sites are occupied sequentially in the order of site 3, then site 2 and site 1.</text>
</comment>
<comment type="PTM">
    <text evidence="1">Cleaved by MMP24. Ectodomain cleavage leads to the generation of a soluble 90 kDa N-terminal soluble fragment and a 45 kDa membrane-bound C-terminal fragment 1 (CTF1), which is further cleaved by gamma-secretase into a 35 kDa. Cleavage in neural stem cells by MMP24 affects CDH2-mediated anchorage of neural stem cells to ependymocytes in the adult subependymal zone, leading to modulate neural stem cell quiescence (By similarity).</text>
</comment>
<comment type="PTM">
    <text evidence="3">May be phosphorylated by OBSCN.</text>
</comment>
<name>CADH2_CRIGR</name>
<accession>O55075</accession>
<evidence type="ECO:0000250" key="1"/>
<evidence type="ECO:0000250" key="2">
    <source>
        <dbReference type="UniProtKB" id="P10288"/>
    </source>
</evidence>
<evidence type="ECO:0000250" key="3">
    <source>
        <dbReference type="UniProtKB" id="P15116"/>
    </source>
</evidence>
<evidence type="ECO:0000250" key="4">
    <source>
        <dbReference type="UniProtKB" id="P19022"/>
    </source>
</evidence>
<evidence type="ECO:0000250" key="5">
    <source>
        <dbReference type="UniProtKB" id="Q9Z1Y3"/>
    </source>
</evidence>
<evidence type="ECO:0000255" key="6"/>
<evidence type="ECO:0000255" key="7">
    <source>
        <dbReference type="PROSITE-ProRule" id="PRU00043"/>
    </source>
</evidence>
<gene>
    <name type="primary">CDH2</name>
</gene>
<organism>
    <name type="scientific">Cricetulus griseus</name>
    <name type="common">Chinese hamster</name>
    <name type="synonym">Cricetulus barabensis griseus</name>
    <dbReference type="NCBI Taxonomy" id="10029"/>
    <lineage>
        <taxon>Eukaryota</taxon>
        <taxon>Metazoa</taxon>
        <taxon>Chordata</taxon>
        <taxon>Craniata</taxon>
        <taxon>Vertebrata</taxon>
        <taxon>Euteleostomi</taxon>
        <taxon>Mammalia</taxon>
        <taxon>Eutheria</taxon>
        <taxon>Euarchontoglires</taxon>
        <taxon>Glires</taxon>
        <taxon>Rodentia</taxon>
        <taxon>Myomorpha</taxon>
        <taxon>Muroidea</taxon>
        <taxon>Cricetidae</taxon>
        <taxon>Cricetinae</taxon>
        <taxon>Cricetulus</taxon>
    </lineage>
</organism>